<dbReference type="EC" id="5.4.2.12" evidence="1"/>
<dbReference type="EMBL" id="CP000083">
    <property type="protein sequence ID" value="AAZ25836.1"/>
    <property type="molecule type" value="Genomic_DNA"/>
</dbReference>
<dbReference type="SMR" id="Q47VY2"/>
<dbReference type="STRING" id="167879.CPS_4391"/>
<dbReference type="KEGG" id="cps:CPS_4391"/>
<dbReference type="eggNOG" id="COG0696">
    <property type="taxonomic scope" value="Bacteria"/>
</dbReference>
<dbReference type="HOGENOM" id="CLU_026099_2_0_6"/>
<dbReference type="UniPathway" id="UPA00109">
    <property type="reaction ID" value="UER00186"/>
</dbReference>
<dbReference type="Proteomes" id="UP000000547">
    <property type="component" value="Chromosome"/>
</dbReference>
<dbReference type="GO" id="GO:0005829">
    <property type="term" value="C:cytosol"/>
    <property type="evidence" value="ECO:0007669"/>
    <property type="project" value="TreeGrafter"/>
</dbReference>
<dbReference type="GO" id="GO:0030145">
    <property type="term" value="F:manganese ion binding"/>
    <property type="evidence" value="ECO:0007669"/>
    <property type="project" value="UniProtKB-UniRule"/>
</dbReference>
<dbReference type="GO" id="GO:0004619">
    <property type="term" value="F:phosphoglycerate mutase activity"/>
    <property type="evidence" value="ECO:0007669"/>
    <property type="project" value="UniProtKB-EC"/>
</dbReference>
<dbReference type="GO" id="GO:0006007">
    <property type="term" value="P:glucose catabolic process"/>
    <property type="evidence" value="ECO:0007669"/>
    <property type="project" value="InterPro"/>
</dbReference>
<dbReference type="GO" id="GO:0006096">
    <property type="term" value="P:glycolytic process"/>
    <property type="evidence" value="ECO:0007669"/>
    <property type="project" value="UniProtKB-UniRule"/>
</dbReference>
<dbReference type="CDD" id="cd16010">
    <property type="entry name" value="iPGM"/>
    <property type="match status" value="1"/>
</dbReference>
<dbReference type="FunFam" id="3.40.1450.10:FF:000001">
    <property type="entry name" value="2,3-bisphosphoglycerate-independent phosphoglycerate mutase"/>
    <property type="match status" value="1"/>
</dbReference>
<dbReference type="FunFam" id="3.40.720.10:FF:000001">
    <property type="entry name" value="2,3-bisphosphoglycerate-independent phosphoglycerate mutase"/>
    <property type="match status" value="1"/>
</dbReference>
<dbReference type="Gene3D" id="3.40.720.10">
    <property type="entry name" value="Alkaline Phosphatase, subunit A"/>
    <property type="match status" value="1"/>
</dbReference>
<dbReference type="Gene3D" id="3.40.1450.10">
    <property type="entry name" value="BPG-independent phosphoglycerate mutase, domain B"/>
    <property type="match status" value="1"/>
</dbReference>
<dbReference type="HAMAP" id="MF_01038">
    <property type="entry name" value="GpmI"/>
    <property type="match status" value="1"/>
</dbReference>
<dbReference type="InterPro" id="IPR017850">
    <property type="entry name" value="Alkaline_phosphatase_core_sf"/>
</dbReference>
<dbReference type="InterPro" id="IPR011258">
    <property type="entry name" value="BPG-indep_PGM_N"/>
</dbReference>
<dbReference type="InterPro" id="IPR006124">
    <property type="entry name" value="Metalloenzyme"/>
</dbReference>
<dbReference type="InterPro" id="IPR036646">
    <property type="entry name" value="PGAM_B_sf"/>
</dbReference>
<dbReference type="InterPro" id="IPR005995">
    <property type="entry name" value="Pgm_bpd_ind"/>
</dbReference>
<dbReference type="NCBIfam" id="TIGR01307">
    <property type="entry name" value="pgm_bpd_ind"/>
    <property type="match status" value="1"/>
</dbReference>
<dbReference type="PANTHER" id="PTHR31637">
    <property type="entry name" value="2,3-BISPHOSPHOGLYCERATE-INDEPENDENT PHOSPHOGLYCERATE MUTASE"/>
    <property type="match status" value="1"/>
</dbReference>
<dbReference type="PANTHER" id="PTHR31637:SF0">
    <property type="entry name" value="2,3-BISPHOSPHOGLYCERATE-INDEPENDENT PHOSPHOGLYCERATE MUTASE"/>
    <property type="match status" value="1"/>
</dbReference>
<dbReference type="Pfam" id="PF06415">
    <property type="entry name" value="iPGM_N"/>
    <property type="match status" value="1"/>
</dbReference>
<dbReference type="Pfam" id="PF01676">
    <property type="entry name" value="Metalloenzyme"/>
    <property type="match status" value="1"/>
</dbReference>
<dbReference type="PIRSF" id="PIRSF001492">
    <property type="entry name" value="IPGAM"/>
    <property type="match status" value="1"/>
</dbReference>
<dbReference type="SUPFAM" id="SSF64158">
    <property type="entry name" value="2,3-Bisphosphoglycerate-independent phosphoglycerate mutase, substrate-binding domain"/>
    <property type="match status" value="1"/>
</dbReference>
<dbReference type="SUPFAM" id="SSF53649">
    <property type="entry name" value="Alkaline phosphatase-like"/>
    <property type="match status" value="1"/>
</dbReference>
<comment type="function">
    <text evidence="1">Catalyzes the interconversion of 2-phosphoglycerate and 3-phosphoglycerate.</text>
</comment>
<comment type="catalytic activity">
    <reaction evidence="1">
        <text>(2R)-2-phosphoglycerate = (2R)-3-phosphoglycerate</text>
        <dbReference type="Rhea" id="RHEA:15901"/>
        <dbReference type="ChEBI" id="CHEBI:58272"/>
        <dbReference type="ChEBI" id="CHEBI:58289"/>
        <dbReference type="EC" id="5.4.2.12"/>
    </reaction>
</comment>
<comment type="cofactor">
    <cofactor evidence="1">
        <name>Mn(2+)</name>
        <dbReference type="ChEBI" id="CHEBI:29035"/>
    </cofactor>
    <text evidence="1">Binds 2 manganese ions per subunit.</text>
</comment>
<comment type="pathway">
    <text evidence="1">Carbohydrate degradation; glycolysis; pyruvate from D-glyceraldehyde 3-phosphate: step 3/5.</text>
</comment>
<comment type="subunit">
    <text evidence="1">Monomer.</text>
</comment>
<comment type="similarity">
    <text evidence="1">Belongs to the BPG-independent phosphoglycerate mutase family.</text>
</comment>
<feature type="chain" id="PRO_0000212139" description="2,3-bisphosphoglycerate-independent phosphoglycerate mutase">
    <location>
        <begin position="1"/>
        <end position="520"/>
    </location>
</feature>
<feature type="active site" description="Phosphoserine intermediate" evidence="1">
    <location>
        <position position="63"/>
    </location>
</feature>
<feature type="binding site" evidence="1">
    <location>
        <position position="13"/>
    </location>
    <ligand>
        <name>Mn(2+)</name>
        <dbReference type="ChEBI" id="CHEBI:29035"/>
        <label>2</label>
    </ligand>
</feature>
<feature type="binding site" evidence="1">
    <location>
        <position position="63"/>
    </location>
    <ligand>
        <name>Mn(2+)</name>
        <dbReference type="ChEBI" id="CHEBI:29035"/>
        <label>2</label>
    </ligand>
</feature>
<feature type="binding site" evidence="1">
    <location>
        <position position="124"/>
    </location>
    <ligand>
        <name>substrate</name>
    </ligand>
</feature>
<feature type="binding site" evidence="1">
    <location>
        <begin position="154"/>
        <end position="155"/>
    </location>
    <ligand>
        <name>substrate</name>
    </ligand>
</feature>
<feature type="binding site" evidence="1">
    <location>
        <position position="192"/>
    </location>
    <ligand>
        <name>substrate</name>
    </ligand>
</feature>
<feature type="binding site" evidence="1">
    <location>
        <position position="198"/>
    </location>
    <ligand>
        <name>substrate</name>
    </ligand>
</feature>
<feature type="binding site" evidence="1">
    <location>
        <begin position="268"/>
        <end position="271"/>
    </location>
    <ligand>
        <name>substrate</name>
    </ligand>
</feature>
<feature type="binding site" evidence="1">
    <location>
        <position position="342"/>
    </location>
    <ligand>
        <name>substrate</name>
    </ligand>
</feature>
<feature type="binding site" evidence="1">
    <location>
        <position position="409"/>
    </location>
    <ligand>
        <name>Mn(2+)</name>
        <dbReference type="ChEBI" id="CHEBI:29035"/>
        <label>1</label>
    </ligand>
</feature>
<feature type="binding site" evidence="1">
    <location>
        <position position="413"/>
    </location>
    <ligand>
        <name>Mn(2+)</name>
        <dbReference type="ChEBI" id="CHEBI:29035"/>
        <label>1</label>
    </ligand>
</feature>
<feature type="binding site" evidence="1">
    <location>
        <position position="450"/>
    </location>
    <ligand>
        <name>Mn(2+)</name>
        <dbReference type="ChEBI" id="CHEBI:29035"/>
        <label>2</label>
    </ligand>
</feature>
<feature type="binding site" evidence="1">
    <location>
        <position position="451"/>
    </location>
    <ligand>
        <name>Mn(2+)</name>
        <dbReference type="ChEBI" id="CHEBI:29035"/>
        <label>2</label>
    </ligand>
</feature>
<feature type="binding site" evidence="1">
    <location>
        <position position="469"/>
    </location>
    <ligand>
        <name>Mn(2+)</name>
        <dbReference type="ChEBI" id="CHEBI:29035"/>
        <label>1</label>
    </ligand>
</feature>
<accession>Q47VY2</accession>
<protein>
    <recommendedName>
        <fullName evidence="1">2,3-bisphosphoglycerate-independent phosphoglycerate mutase</fullName>
        <shortName evidence="1">BPG-independent PGAM</shortName>
        <shortName evidence="1">Phosphoglyceromutase</shortName>
        <shortName evidence="1">iPGM</shortName>
        <ecNumber evidence="1">5.4.2.12</ecNumber>
    </recommendedName>
</protein>
<name>GPMI_COLP3</name>
<sequence>MANKKSTVLMILDGWGYREETSSNAIHQANTPVLDNLKAKYPNMLIDTSGMAVGLPEGQMGNSEVGHVNLGAGRVVYQDFTRITKAISDGDFIENPTLCHAVDTATSNNKAVHIFGLLSPGGVHSHEEHIFAMMELAKKRGAQKVYLHAFLDGRDTPPRSAQASLEKAQQKFSKLFTETDTGEGQIASVIGRYYAMDRDQRWDRVEAAYNLMVNGEGLHQYNSALDALAAAYERNENDEFVGASAITSPSGKAIKVNDGDALIFMNFRADRARQFSRCFTDTNFNGFERKRIPAISNFVMLTQYAADIDAPSAFAPTPLTNVMGEWLAKHNKTQLRISETEKYAHVTFFFSGGKEDMFTGEERILVPSPDVATYDLQPEMNSTLLTDKLVGAIESGKYDFIVCNYPNGDMVGHTGSFDAAVKACEAVDTCVGRVVKAAQDNGGECLITADHGNAEQMQDPVSGQAHTAHTCEPVPLIYVGRNASPAASGTLSDISPSVLHLMGMEQPQEMTGSVLMQLIK</sequence>
<proteinExistence type="inferred from homology"/>
<evidence type="ECO:0000255" key="1">
    <source>
        <dbReference type="HAMAP-Rule" id="MF_01038"/>
    </source>
</evidence>
<keyword id="KW-0324">Glycolysis</keyword>
<keyword id="KW-0413">Isomerase</keyword>
<keyword id="KW-0464">Manganese</keyword>
<keyword id="KW-0479">Metal-binding</keyword>
<reference key="1">
    <citation type="journal article" date="2005" name="Proc. Natl. Acad. Sci. U.S.A.">
        <title>The psychrophilic lifestyle as revealed by the genome sequence of Colwellia psychrerythraea 34H through genomic and proteomic analyses.</title>
        <authorList>
            <person name="Methe B.A."/>
            <person name="Nelson K.E."/>
            <person name="Deming J.W."/>
            <person name="Momen B."/>
            <person name="Melamud E."/>
            <person name="Zhang X."/>
            <person name="Moult J."/>
            <person name="Madupu R."/>
            <person name="Nelson W.C."/>
            <person name="Dodson R.J."/>
            <person name="Brinkac L.M."/>
            <person name="Daugherty S.C."/>
            <person name="Durkin A.S."/>
            <person name="DeBoy R.T."/>
            <person name="Kolonay J.F."/>
            <person name="Sullivan S.A."/>
            <person name="Zhou L."/>
            <person name="Davidsen T.M."/>
            <person name="Wu M."/>
            <person name="Huston A.L."/>
            <person name="Lewis M."/>
            <person name="Weaver B."/>
            <person name="Weidman J.F."/>
            <person name="Khouri H."/>
            <person name="Utterback T.R."/>
            <person name="Feldblyum T.V."/>
            <person name="Fraser C.M."/>
        </authorList>
    </citation>
    <scope>NUCLEOTIDE SEQUENCE [LARGE SCALE GENOMIC DNA]</scope>
    <source>
        <strain>34H / ATCC BAA-681</strain>
    </source>
</reference>
<organism>
    <name type="scientific">Colwellia psychrerythraea (strain 34H / ATCC BAA-681)</name>
    <name type="common">Vibrio psychroerythus</name>
    <dbReference type="NCBI Taxonomy" id="167879"/>
    <lineage>
        <taxon>Bacteria</taxon>
        <taxon>Pseudomonadati</taxon>
        <taxon>Pseudomonadota</taxon>
        <taxon>Gammaproteobacteria</taxon>
        <taxon>Alteromonadales</taxon>
        <taxon>Colwelliaceae</taxon>
        <taxon>Colwellia</taxon>
    </lineage>
</organism>
<gene>
    <name evidence="1" type="primary">gpmI</name>
    <name type="synonym">gpmA</name>
    <name type="ordered locus">CPS_4391</name>
</gene>